<name>RLMG_STUS1</name>
<accession>A4VI28</accession>
<feature type="chain" id="PRO_0000366483" description="Ribosomal RNA large subunit methyltransferase G">
    <location>
        <begin position="1"/>
        <end position="375"/>
    </location>
</feature>
<protein>
    <recommendedName>
        <fullName evidence="1">Ribosomal RNA large subunit methyltransferase G</fullName>
        <ecNumber evidence="1">2.1.1.174</ecNumber>
    </recommendedName>
    <alternativeName>
        <fullName evidence="1">23S rRNA m2G1835 methyltransferase</fullName>
    </alternativeName>
    <alternativeName>
        <fullName evidence="1">rRNA (guanine-N(2)-)-methyltransferase RlmG</fullName>
    </alternativeName>
</protein>
<dbReference type="EC" id="2.1.1.174" evidence="1"/>
<dbReference type="EMBL" id="CP000304">
    <property type="protein sequence ID" value="ABP78629.1"/>
    <property type="molecule type" value="Genomic_DNA"/>
</dbReference>
<dbReference type="RefSeq" id="WP_011912122.1">
    <property type="nucleotide sequence ID" value="NC_009434.1"/>
</dbReference>
<dbReference type="SMR" id="A4VI28"/>
<dbReference type="KEGG" id="psa:PST_0932"/>
<dbReference type="eggNOG" id="COG2813">
    <property type="taxonomic scope" value="Bacteria"/>
</dbReference>
<dbReference type="HOGENOM" id="CLU_040288_4_0_6"/>
<dbReference type="Proteomes" id="UP000000233">
    <property type="component" value="Chromosome"/>
</dbReference>
<dbReference type="GO" id="GO:0005737">
    <property type="term" value="C:cytoplasm"/>
    <property type="evidence" value="ECO:0007669"/>
    <property type="project" value="UniProtKB-SubCell"/>
</dbReference>
<dbReference type="GO" id="GO:0052916">
    <property type="term" value="F:23S rRNA (guanine(1835)-N(2))-methyltransferase activity"/>
    <property type="evidence" value="ECO:0007669"/>
    <property type="project" value="UniProtKB-EC"/>
</dbReference>
<dbReference type="GO" id="GO:0003676">
    <property type="term" value="F:nucleic acid binding"/>
    <property type="evidence" value="ECO:0007669"/>
    <property type="project" value="InterPro"/>
</dbReference>
<dbReference type="CDD" id="cd02440">
    <property type="entry name" value="AdoMet_MTases"/>
    <property type="match status" value="1"/>
</dbReference>
<dbReference type="Gene3D" id="3.40.50.150">
    <property type="entry name" value="Vaccinia Virus protein VP39"/>
    <property type="match status" value="2"/>
</dbReference>
<dbReference type="HAMAP" id="MF_01859">
    <property type="entry name" value="23SrRNA_methyltr_G"/>
    <property type="match status" value="1"/>
</dbReference>
<dbReference type="InterPro" id="IPR002052">
    <property type="entry name" value="DNA_methylase_N6_adenine_CS"/>
</dbReference>
<dbReference type="InterPro" id="IPR017237">
    <property type="entry name" value="rRNA_m2G-MeTrfase_RlmG"/>
</dbReference>
<dbReference type="InterPro" id="IPR046977">
    <property type="entry name" value="RsmC/RlmG"/>
</dbReference>
<dbReference type="InterPro" id="IPR029063">
    <property type="entry name" value="SAM-dependent_MTases_sf"/>
</dbReference>
<dbReference type="InterPro" id="IPR007848">
    <property type="entry name" value="Small_mtfrase_dom"/>
</dbReference>
<dbReference type="PANTHER" id="PTHR47816:SF5">
    <property type="entry name" value="RIBOSOMAL RNA LARGE SUBUNIT METHYLTRANSFERASE G"/>
    <property type="match status" value="1"/>
</dbReference>
<dbReference type="PANTHER" id="PTHR47816">
    <property type="entry name" value="RIBOSOMAL RNA SMALL SUBUNIT METHYLTRANSFERASE C"/>
    <property type="match status" value="1"/>
</dbReference>
<dbReference type="Pfam" id="PF05175">
    <property type="entry name" value="MTS"/>
    <property type="match status" value="1"/>
</dbReference>
<dbReference type="PIRSF" id="PIRSF037565">
    <property type="entry name" value="RRNA_m2G_Mtase_RsmD_prd"/>
    <property type="match status" value="1"/>
</dbReference>
<dbReference type="SUPFAM" id="SSF53335">
    <property type="entry name" value="S-adenosyl-L-methionine-dependent methyltransferases"/>
    <property type="match status" value="2"/>
</dbReference>
<sequence>MPILDTPYASLDLIRQPEQPNEPLQAFDAADEYLLATLHGQGLPAATRVLILNDSFGALACALAAHVEVTSSGDSHLAHLALQKNLARNDLPADRVRFVPASEAAQGPFDRVLIRVPKTLSLLEEQLIRLHDQLAPGAQVIAAAMIKHLPRAAGDLLEQYIGPVQASLAVKKARLLSATPVDKPAPQSPYPTRYQLDQPKLELLNHANLFCREGLDIGTRAFLPHLPKALGAIRVADLGCGNGVLGIVYALGNPQAELTLVDESYMAVQSARENWQVILGERPADIRAGDGLAEQPPGSLDLVLCNPPFHQQQVVGDFLAWRMFTQAKAALTKGGELWIVGNRHLGYHLKLKRLFGNAEQVAATPKFVVLRSIKA</sequence>
<reference key="1">
    <citation type="journal article" date="2008" name="Proc. Natl. Acad. Sci. U.S.A.">
        <title>Nitrogen fixation island and rhizosphere competence traits in the genome of root-associated Pseudomonas stutzeri A1501.</title>
        <authorList>
            <person name="Yan Y."/>
            <person name="Yang J."/>
            <person name="Dou Y."/>
            <person name="Chen M."/>
            <person name="Ping S."/>
            <person name="Peng J."/>
            <person name="Lu W."/>
            <person name="Zhang W."/>
            <person name="Yao Z."/>
            <person name="Li H."/>
            <person name="Liu W."/>
            <person name="He S."/>
            <person name="Geng L."/>
            <person name="Zhang X."/>
            <person name="Yang F."/>
            <person name="Yu H."/>
            <person name="Zhan Y."/>
            <person name="Li D."/>
            <person name="Lin Z."/>
            <person name="Wang Y."/>
            <person name="Elmerich C."/>
            <person name="Lin M."/>
            <person name="Jin Q."/>
        </authorList>
    </citation>
    <scope>NUCLEOTIDE SEQUENCE [LARGE SCALE GENOMIC DNA]</scope>
    <source>
        <strain>A1501</strain>
    </source>
</reference>
<comment type="function">
    <text evidence="1">Specifically methylates the guanine in position 1835 (m2G1835) of 23S rRNA.</text>
</comment>
<comment type="catalytic activity">
    <reaction evidence="1">
        <text>guanosine(1835) in 23S rRNA + S-adenosyl-L-methionine = N(2)-methylguanosine(1835) in 23S rRNA + S-adenosyl-L-homocysteine + H(+)</text>
        <dbReference type="Rhea" id="RHEA:42744"/>
        <dbReference type="Rhea" id="RHEA-COMP:10217"/>
        <dbReference type="Rhea" id="RHEA-COMP:10218"/>
        <dbReference type="ChEBI" id="CHEBI:15378"/>
        <dbReference type="ChEBI" id="CHEBI:57856"/>
        <dbReference type="ChEBI" id="CHEBI:59789"/>
        <dbReference type="ChEBI" id="CHEBI:74269"/>
        <dbReference type="ChEBI" id="CHEBI:74481"/>
        <dbReference type="EC" id="2.1.1.174"/>
    </reaction>
</comment>
<comment type="subcellular location">
    <subcellularLocation>
        <location evidence="1">Cytoplasm</location>
    </subcellularLocation>
</comment>
<comment type="similarity">
    <text evidence="1">Belongs to the methyltransferase superfamily. RlmG family.</text>
</comment>
<organism>
    <name type="scientific">Stutzerimonas stutzeri (strain A1501)</name>
    <name type="common">Pseudomonas stutzeri</name>
    <dbReference type="NCBI Taxonomy" id="379731"/>
    <lineage>
        <taxon>Bacteria</taxon>
        <taxon>Pseudomonadati</taxon>
        <taxon>Pseudomonadota</taxon>
        <taxon>Gammaproteobacteria</taxon>
        <taxon>Pseudomonadales</taxon>
        <taxon>Pseudomonadaceae</taxon>
        <taxon>Stutzerimonas</taxon>
    </lineage>
</organism>
<gene>
    <name evidence="1" type="primary">rlmG</name>
    <name type="ordered locus">PST_0932</name>
</gene>
<evidence type="ECO:0000255" key="1">
    <source>
        <dbReference type="HAMAP-Rule" id="MF_01859"/>
    </source>
</evidence>
<proteinExistence type="inferred from homology"/>
<keyword id="KW-0963">Cytoplasm</keyword>
<keyword id="KW-0489">Methyltransferase</keyword>
<keyword id="KW-1185">Reference proteome</keyword>
<keyword id="KW-0698">rRNA processing</keyword>
<keyword id="KW-0949">S-adenosyl-L-methionine</keyword>
<keyword id="KW-0808">Transferase</keyword>